<proteinExistence type="inferred from homology"/>
<organism>
    <name type="scientific">Mycolicibacterium vanbaalenii (strain DSM 7251 / JCM 13017 / BCRC 16820 / KCTC 9966 / NRRL B-24157 / PYR-1)</name>
    <name type="common">Mycobacterium vanbaalenii</name>
    <dbReference type="NCBI Taxonomy" id="350058"/>
    <lineage>
        <taxon>Bacteria</taxon>
        <taxon>Bacillati</taxon>
        <taxon>Actinomycetota</taxon>
        <taxon>Actinomycetes</taxon>
        <taxon>Mycobacteriales</taxon>
        <taxon>Mycobacteriaceae</taxon>
        <taxon>Mycolicibacterium</taxon>
    </lineage>
</organism>
<gene>
    <name evidence="2" type="primary">whiA</name>
    <name type="ordered locus">Mvan_2700</name>
</gene>
<reference key="1">
    <citation type="submission" date="2006-12" db="EMBL/GenBank/DDBJ databases">
        <title>Complete sequence of Mycobacterium vanbaalenii PYR-1.</title>
        <authorList>
            <consortium name="US DOE Joint Genome Institute"/>
            <person name="Copeland A."/>
            <person name="Lucas S."/>
            <person name="Lapidus A."/>
            <person name="Barry K."/>
            <person name="Detter J.C."/>
            <person name="Glavina del Rio T."/>
            <person name="Hammon N."/>
            <person name="Israni S."/>
            <person name="Dalin E."/>
            <person name="Tice H."/>
            <person name="Pitluck S."/>
            <person name="Singan V."/>
            <person name="Schmutz J."/>
            <person name="Larimer F."/>
            <person name="Land M."/>
            <person name="Hauser L."/>
            <person name="Kyrpides N."/>
            <person name="Anderson I.J."/>
            <person name="Miller C."/>
            <person name="Richardson P."/>
        </authorList>
    </citation>
    <scope>NUCLEOTIDE SEQUENCE [LARGE SCALE GENOMIC DNA]</scope>
    <source>
        <strain>DSM 7251 / JCM 13017 / BCRC 16820 / KCTC 9966 / NRRL B-24157 / PYR-1</strain>
    </source>
</reference>
<feature type="chain" id="PRO_0000376537" description="Probable cell division protein WhiA">
    <location>
        <begin position="1"/>
        <end position="327"/>
    </location>
</feature>
<feature type="DNA-binding region" description="H-T-H motif" evidence="2">
    <location>
        <begin position="277"/>
        <end position="310"/>
    </location>
</feature>
<feature type="region of interest" description="Disordered" evidence="3">
    <location>
        <begin position="304"/>
        <end position="327"/>
    </location>
</feature>
<protein>
    <recommendedName>
        <fullName evidence="2">Probable cell division protein WhiA</fullName>
    </recommendedName>
</protein>
<accession>A1T8K7</accession>
<name>WHIA_MYCVP</name>
<comment type="function">
    <text evidence="2">Involved in cell division and chromosome segregation.</text>
</comment>
<comment type="similarity">
    <text evidence="2">Belongs to the WhiA family.</text>
</comment>
<comment type="sequence caution" evidence="1">
    <conflict type="erroneous initiation">
        <sequence resource="EMBL-CDS" id="ABM13507"/>
    </conflict>
    <text>Truncated N-terminus.</text>
</comment>
<evidence type="ECO:0000250" key="1">
    <source>
        <dbReference type="UniProtKB" id="P9WF45"/>
    </source>
</evidence>
<evidence type="ECO:0000255" key="2">
    <source>
        <dbReference type="HAMAP-Rule" id="MF_01420"/>
    </source>
</evidence>
<evidence type="ECO:0000256" key="3">
    <source>
        <dbReference type="SAM" id="MobiDB-lite"/>
    </source>
</evidence>
<keyword id="KW-0131">Cell cycle</keyword>
<keyword id="KW-0132">Cell division</keyword>
<keyword id="KW-0238">DNA-binding</keyword>
<dbReference type="EMBL" id="CP000511">
    <property type="protein sequence ID" value="ABM13507.1"/>
    <property type="status" value="ALT_INIT"/>
    <property type="molecule type" value="Genomic_DNA"/>
</dbReference>
<dbReference type="SMR" id="A1T8K7"/>
<dbReference type="STRING" id="350058.Mvan_2700"/>
<dbReference type="KEGG" id="mva:Mvan_2700"/>
<dbReference type="eggNOG" id="COG1481">
    <property type="taxonomic scope" value="Bacteria"/>
</dbReference>
<dbReference type="HOGENOM" id="CLU_053282_0_0_11"/>
<dbReference type="Proteomes" id="UP000009159">
    <property type="component" value="Chromosome"/>
</dbReference>
<dbReference type="GO" id="GO:0003677">
    <property type="term" value="F:DNA binding"/>
    <property type="evidence" value="ECO:0007669"/>
    <property type="project" value="UniProtKB-UniRule"/>
</dbReference>
<dbReference type="GO" id="GO:0051301">
    <property type="term" value="P:cell division"/>
    <property type="evidence" value="ECO:0007669"/>
    <property type="project" value="UniProtKB-UniRule"/>
</dbReference>
<dbReference type="GO" id="GO:0043937">
    <property type="term" value="P:regulation of sporulation"/>
    <property type="evidence" value="ECO:0007669"/>
    <property type="project" value="InterPro"/>
</dbReference>
<dbReference type="FunFam" id="3.10.28.10:FF:000001">
    <property type="entry name" value="Probable cell division protein WhiA"/>
    <property type="match status" value="1"/>
</dbReference>
<dbReference type="Gene3D" id="3.10.28.10">
    <property type="entry name" value="Homing endonucleases"/>
    <property type="match status" value="1"/>
</dbReference>
<dbReference type="HAMAP" id="MF_01420">
    <property type="entry name" value="HTH_type_WhiA"/>
    <property type="match status" value="1"/>
</dbReference>
<dbReference type="InterPro" id="IPR027434">
    <property type="entry name" value="Homing_endonucl"/>
</dbReference>
<dbReference type="InterPro" id="IPR018478">
    <property type="entry name" value="Sporu_reg_WhiA_N_dom"/>
</dbReference>
<dbReference type="InterPro" id="IPR003802">
    <property type="entry name" value="Sporulation_regulator_WhiA"/>
</dbReference>
<dbReference type="InterPro" id="IPR023054">
    <property type="entry name" value="Sporulation_regulator_WhiA_C"/>
</dbReference>
<dbReference type="InterPro" id="IPR039518">
    <property type="entry name" value="WhiA_LAGLIDADG_dom"/>
</dbReference>
<dbReference type="NCBIfam" id="TIGR00647">
    <property type="entry name" value="DNA_bind_WhiA"/>
    <property type="match status" value="1"/>
</dbReference>
<dbReference type="PANTHER" id="PTHR37307">
    <property type="entry name" value="CELL DIVISION PROTEIN WHIA-RELATED"/>
    <property type="match status" value="1"/>
</dbReference>
<dbReference type="PANTHER" id="PTHR37307:SF1">
    <property type="entry name" value="CELL DIVISION PROTEIN WHIA-RELATED"/>
    <property type="match status" value="1"/>
</dbReference>
<dbReference type="Pfam" id="PF02650">
    <property type="entry name" value="HTH_WhiA"/>
    <property type="match status" value="1"/>
</dbReference>
<dbReference type="Pfam" id="PF14527">
    <property type="entry name" value="LAGLIDADG_WhiA"/>
    <property type="match status" value="1"/>
</dbReference>
<dbReference type="Pfam" id="PF10298">
    <property type="entry name" value="WhiA_N"/>
    <property type="match status" value="1"/>
</dbReference>
<sequence>MAMTAEVKDELSRLVVNSVSARRAEVASLLRFAGGLHIVSGRVVVEAEVDLGIIARRLRKDIYDLYGYNAVVHVLSASGIRKSTRYVVRVAKDGEALARQTGLLDLRGRPVRGLPAQVVGGSVGDAEAAWRGAFLAHGSLTEPGRSSALEVSCPGPEAALALVGAARRLGVSAKAREVRGSDRVVVRDGEAIGALLTRMGAQDTRLTWEERRMRREVRATANRLANFDDANLRRSARAAVAAAARVERALQILGDTVPDHLAAAGNLRVAHRQASLEELGRLADPPMTKDAVAGRIRRLLSMADRKAKQDGIPDTESAVTPDLLEDA</sequence>